<keyword id="KW-1185">Reference proteome</keyword>
<proteinExistence type="inferred from homology"/>
<dbReference type="EMBL" id="AE004439">
    <property type="protein sequence ID" value="AAK02295.1"/>
    <property type="molecule type" value="Genomic_DNA"/>
</dbReference>
<dbReference type="SMR" id="Q9CP49"/>
<dbReference type="STRING" id="272843.PM0211"/>
<dbReference type="EnsemblBacteria" id="AAK02295">
    <property type="protein sequence ID" value="AAK02295"/>
    <property type="gene ID" value="PM0211"/>
</dbReference>
<dbReference type="KEGG" id="pmu:PM0211"/>
<dbReference type="HOGENOM" id="CLU_064263_0_0_6"/>
<dbReference type="Proteomes" id="UP000000809">
    <property type="component" value="Chromosome"/>
</dbReference>
<dbReference type="Gene3D" id="3.20.20.150">
    <property type="entry name" value="Divalent-metal-dependent TIM barrel enzymes"/>
    <property type="match status" value="1"/>
</dbReference>
<dbReference type="HAMAP" id="MF_00697">
    <property type="entry name" value="UPF0276"/>
    <property type="match status" value="1"/>
</dbReference>
<dbReference type="InterPro" id="IPR007801">
    <property type="entry name" value="MbnB/TglH/ChrH"/>
</dbReference>
<dbReference type="InterPro" id="IPR036237">
    <property type="entry name" value="Xyl_isomerase-like_sf"/>
</dbReference>
<dbReference type="NCBIfam" id="NF003818">
    <property type="entry name" value="PRK05409.1"/>
    <property type="match status" value="1"/>
</dbReference>
<dbReference type="PANTHER" id="PTHR42194">
    <property type="entry name" value="UPF0276 PROTEIN HI_1600"/>
    <property type="match status" value="1"/>
</dbReference>
<dbReference type="PANTHER" id="PTHR42194:SF1">
    <property type="entry name" value="UPF0276 PROTEIN HI_1600"/>
    <property type="match status" value="1"/>
</dbReference>
<dbReference type="Pfam" id="PF05114">
    <property type="entry name" value="MbnB_TglH_ChrH"/>
    <property type="match status" value="1"/>
</dbReference>
<dbReference type="SUPFAM" id="SSF51658">
    <property type="entry name" value="Xylose isomerase-like"/>
    <property type="match status" value="1"/>
</dbReference>
<name>Y211_PASMU</name>
<comment type="similarity">
    <text evidence="1">Belongs to the UPF0276 family.</text>
</comment>
<accession>Q9CP49</accession>
<feature type="chain" id="PRO_0000192699" description="UPF0276 protein PM0211">
    <location>
        <begin position="1"/>
        <end position="307"/>
    </location>
</feature>
<protein>
    <recommendedName>
        <fullName evidence="1">UPF0276 protein PM0211</fullName>
    </recommendedName>
</protein>
<evidence type="ECO:0000255" key="1">
    <source>
        <dbReference type="HAMAP-Rule" id="MF_00697"/>
    </source>
</evidence>
<reference key="1">
    <citation type="journal article" date="2001" name="Proc. Natl. Acad. Sci. U.S.A.">
        <title>Complete genomic sequence of Pasteurella multocida Pm70.</title>
        <authorList>
            <person name="May B.J."/>
            <person name="Zhang Q."/>
            <person name="Li L.L."/>
            <person name="Paustian M.L."/>
            <person name="Whittam T.S."/>
            <person name="Kapur V."/>
        </authorList>
    </citation>
    <scope>NUCLEOTIDE SEQUENCE [LARGE SCALE GENOMIC DNA]</scope>
    <source>
        <strain>Pm70</strain>
    </source>
</reference>
<sequence length="307" mass="34664">MMLQGAGLGYRRDLAEDFLLLPDNSVVNFMEVAPENWIKMGGAARYKFDQAAERFPLAVHGLSLSLGGQAPLDKALLQGIKALMTQYQAVFFSEHLSYCECDGHLYDLLPMPFTEEAVKHVAQRIREVQDFLGMQISLENTSYYLHSPTSTMNEVEFLNAIAQEANCGIHLDVNNIYVNGVNHGLLNPYVFLDHVDVSRVNYIHIAGHDEEHGAANPISPSDEAFNKIKGEYRHLPQLLVDTHGEAVKSNVWDLLEYAYQRLPHIPPTLLERDFNFPPFAELYAEVEHIAQLQQKHAKLTVENRHAA</sequence>
<organism>
    <name type="scientific">Pasteurella multocida (strain Pm70)</name>
    <dbReference type="NCBI Taxonomy" id="272843"/>
    <lineage>
        <taxon>Bacteria</taxon>
        <taxon>Pseudomonadati</taxon>
        <taxon>Pseudomonadota</taxon>
        <taxon>Gammaproteobacteria</taxon>
        <taxon>Pasteurellales</taxon>
        <taxon>Pasteurellaceae</taxon>
        <taxon>Pasteurella</taxon>
    </lineage>
</organism>
<gene>
    <name type="ordered locus">PM0211</name>
</gene>